<gene>
    <name evidence="1" type="primary">nfi</name>
    <name type="ordered locus">VNG_0363G</name>
</gene>
<keyword id="KW-0963">Cytoplasm</keyword>
<keyword id="KW-0227">DNA damage</keyword>
<keyword id="KW-0234">DNA repair</keyword>
<keyword id="KW-0255">Endonuclease</keyword>
<keyword id="KW-0378">Hydrolase</keyword>
<keyword id="KW-0460">Magnesium</keyword>
<keyword id="KW-0479">Metal-binding</keyword>
<keyword id="KW-0540">Nuclease</keyword>
<keyword id="KW-1185">Reference proteome</keyword>
<dbReference type="EC" id="3.1.21.7" evidence="1"/>
<dbReference type="EMBL" id="AE004437">
    <property type="protein sequence ID" value="AAG18927.1"/>
    <property type="molecule type" value="Genomic_DNA"/>
</dbReference>
<dbReference type="PIR" id="C84195">
    <property type="entry name" value="C84195"/>
</dbReference>
<dbReference type="RefSeq" id="WP_010902222.1">
    <property type="nucleotide sequence ID" value="NC_002607.1"/>
</dbReference>
<dbReference type="SMR" id="Q9HS81"/>
<dbReference type="STRING" id="64091.VNG_0363G"/>
<dbReference type="PaxDb" id="64091-VNG_0363G"/>
<dbReference type="KEGG" id="hal:VNG_0363G"/>
<dbReference type="PATRIC" id="fig|64091.14.peg.269"/>
<dbReference type="HOGENOM" id="CLU_047631_2_0_2"/>
<dbReference type="InParanoid" id="Q9HS81"/>
<dbReference type="OrthoDB" id="7885at2157"/>
<dbReference type="PhylomeDB" id="Q9HS81"/>
<dbReference type="Proteomes" id="UP000000554">
    <property type="component" value="Chromosome"/>
</dbReference>
<dbReference type="GO" id="GO:0005737">
    <property type="term" value="C:cytoplasm"/>
    <property type="evidence" value="ECO:0007669"/>
    <property type="project" value="UniProtKB-SubCell"/>
</dbReference>
<dbReference type="GO" id="GO:0043737">
    <property type="term" value="F:deoxyribonuclease V activity"/>
    <property type="evidence" value="ECO:0007669"/>
    <property type="project" value="UniProtKB-UniRule"/>
</dbReference>
<dbReference type="GO" id="GO:0000287">
    <property type="term" value="F:magnesium ion binding"/>
    <property type="evidence" value="ECO:0007669"/>
    <property type="project" value="UniProtKB-UniRule"/>
</dbReference>
<dbReference type="GO" id="GO:0016891">
    <property type="term" value="F:RNA endonuclease activity, producing 5'-phosphomonoesters"/>
    <property type="evidence" value="ECO:0000318"/>
    <property type="project" value="GO_Central"/>
</dbReference>
<dbReference type="GO" id="GO:0003727">
    <property type="term" value="F:single-stranded RNA binding"/>
    <property type="evidence" value="ECO:0000318"/>
    <property type="project" value="GO_Central"/>
</dbReference>
<dbReference type="GO" id="GO:0006281">
    <property type="term" value="P:DNA repair"/>
    <property type="evidence" value="ECO:0007669"/>
    <property type="project" value="UniProtKB-UniRule"/>
</dbReference>
<dbReference type="CDD" id="cd06559">
    <property type="entry name" value="Endonuclease_V"/>
    <property type="match status" value="1"/>
</dbReference>
<dbReference type="Gene3D" id="3.30.2170.10">
    <property type="entry name" value="archaeoglobus fulgidus dsm 4304 superfamily"/>
    <property type="match status" value="1"/>
</dbReference>
<dbReference type="HAMAP" id="MF_00801">
    <property type="entry name" value="Endonuclease_5"/>
    <property type="match status" value="1"/>
</dbReference>
<dbReference type="InterPro" id="IPR007581">
    <property type="entry name" value="Endonuclease-V"/>
</dbReference>
<dbReference type="PANTHER" id="PTHR28511">
    <property type="entry name" value="ENDONUCLEASE V"/>
    <property type="match status" value="1"/>
</dbReference>
<dbReference type="PANTHER" id="PTHR28511:SF1">
    <property type="entry name" value="ENDONUCLEASE V"/>
    <property type="match status" value="1"/>
</dbReference>
<dbReference type="Pfam" id="PF04493">
    <property type="entry name" value="Endonuclease_5"/>
    <property type="match status" value="1"/>
</dbReference>
<proteinExistence type="inferred from homology"/>
<comment type="function">
    <text evidence="1">DNA repair enzyme involved in the repair of deaminated bases. Selectively cleaves double-stranded DNA at the second phosphodiester bond 3' to a deoxyinosine leaving behind the intact lesion on the nicked DNA.</text>
</comment>
<comment type="catalytic activity">
    <reaction evidence="1">
        <text>Endonucleolytic cleavage at apurinic or apyrimidinic sites to products with a 5'-phosphate.</text>
        <dbReference type="EC" id="3.1.21.7"/>
    </reaction>
</comment>
<comment type="cofactor">
    <cofactor evidence="1">
        <name>Mg(2+)</name>
        <dbReference type="ChEBI" id="CHEBI:18420"/>
    </cofactor>
</comment>
<comment type="subcellular location">
    <subcellularLocation>
        <location evidence="1">Cytoplasm</location>
    </subcellularLocation>
</comment>
<comment type="similarity">
    <text evidence="1">Belongs to the endonuclease V family.</text>
</comment>
<evidence type="ECO:0000255" key="1">
    <source>
        <dbReference type="HAMAP-Rule" id="MF_00801"/>
    </source>
</evidence>
<reference key="1">
    <citation type="journal article" date="2000" name="Proc. Natl. Acad. Sci. U.S.A.">
        <title>Genome sequence of Halobacterium species NRC-1.</title>
        <authorList>
            <person name="Ng W.V."/>
            <person name="Kennedy S.P."/>
            <person name="Mahairas G.G."/>
            <person name="Berquist B."/>
            <person name="Pan M."/>
            <person name="Shukla H.D."/>
            <person name="Lasky S.R."/>
            <person name="Baliga N.S."/>
            <person name="Thorsson V."/>
            <person name="Sbrogna J."/>
            <person name="Swartzell S."/>
            <person name="Weir D."/>
            <person name="Hall J."/>
            <person name="Dahl T.A."/>
            <person name="Welti R."/>
            <person name="Goo Y.A."/>
            <person name="Leithauser B."/>
            <person name="Keller K."/>
            <person name="Cruz R."/>
            <person name="Danson M.J."/>
            <person name="Hough D.W."/>
            <person name="Maddocks D.G."/>
            <person name="Jablonski P.E."/>
            <person name="Krebs M.P."/>
            <person name="Angevine C.M."/>
            <person name="Dale H."/>
            <person name="Isenbarger T.A."/>
            <person name="Peck R.F."/>
            <person name="Pohlschroder M."/>
            <person name="Spudich J.L."/>
            <person name="Jung K.-H."/>
            <person name="Alam M."/>
            <person name="Freitas T."/>
            <person name="Hou S."/>
            <person name="Daniels C.J."/>
            <person name="Dennis P.P."/>
            <person name="Omer A.D."/>
            <person name="Ebhardt H."/>
            <person name="Lowe T.M."/>
            <person name="Liang P."/>
            <person name="Riley M."/>
            <person name="Hood L."/>
            <person name="DasSarma S."/>
        </authorList>
    </citation>
    <scope>NUCLEOTIDE SEQUENCE [LARGE SCALE GENOMIC DNA]</scope>
    <source>
        <strain>ATCC 700922 / JCM 11081 / NRC-1</strain>
    </source>
</reference>
<sequence length="264" mass="27224">MRVVRPEFRPAPGLDTDAMASRQRDIAAVADFADDHGLTPERIGLDEPPGEQAALGGATTSGEAAPVVVGVDQAFRDDEVSVSAAVAIRDGAVIERAAGNAPLDVPYVPGLLAFREGSAVIDALSSLSVEPDLLVVDGSGRIHYRQAGLATHVGVLFDVPAVGVAKSLLCGTPAAALADPLPAGTRVAIEADDSMDAPDGAVVGYALQSRQYPTPETRHINPLYVSPGHRVSAGTAADLVEATCTQYKLPAPTRLADQYAADLT</sequence>
<organism>
    <name type="scientific">Halobacterium salinarum (strain ATCC 700922 / JCM 11081 / NRC-1)</name>
    <name type="common">Halobacterium halobium</name>
    <dbReference type="NCBI Taxonomy" id="64091"/>
    <lineage>
        <taxon>Archaea</taxon>
        <taxon>Methanobacteriati</taxon>
        <taxon>Methanobacteriota</taxon>
        <taxon>Stenosarchaea group</taxon>
        <taxon>Halobacteria</taxon>
        <taxon>Halobacteriales</taxon>
        <taxon>Halobacteriaceae</taxon>
        <taxon>Halobacterium</taxon>
        <taxon>Halobacterium salinarum NRC-34001</taxon>
    </lineage>
</organism>
<feature type="chain" id="PRO_0000159686" description="Endonuclease V">
    <location>
        <begin position="1"/>
        <end position="264"/>
    </location>
</feature>
<feature type="binding site" evidence="1">
    <location>
        <position position="72"/>
    </location>
    <ligand>
        <name>Mg(2+)</name>
        <dbReference type="ChEBI" id="CHEBI:18420"/>
    </ligand>
</feature>
<feature type="binding site" evidence="1">
    <location>
        <position position="137"/>
    </location>
    <ligand>
        <name>Mg(2+)</name>
        <dbReference type="ChEBI" id="CHEBI:18420"/>
    </ligand>
</feature>
<feature type="site" description="Interaction with target DNA" evidence="1">
    <location>
        <position position="107"/>
    </location>
</feature>
<name>NFI_HALSA</name>
<protein>
    <recommendedName>
        <fullName evidence="1">Endonuclease V</fullName>
        <ecNumber evidence="1">3.1.21.7</ecNumber>
    </recommendedName>
    <alternativeName>
        <fullName evidence="1">Deoxyinosine 3'endonuclease</fullName>
    </alternativeName>
    <alternativeName>
        <fullName evidence="1">Deoxyribonuclease V</fullName>
        <shortName evidence="1">DNase V</shortName>
    </alternativeName>
</protein>
<accession>Q9HS81</accession>